<keyword id="KW-0249">Electron transport</keyword>
<keyword id="KW-0349">Heme</keyword>
<keyword id="KW-0408">Iron</keyword>
<keyword id="KW-0472">Membrane</keyword>
<keyword id="KW-0479">Metal-binding</keyword>
<keyword id="KW-0496">Mitochondrion</keyword>
<keyword id="KW-0999">Mitochondrion inner membrane</keyword>
<keyword id="KW-0679">Respiratory chain</keyword>
<keyword id="KW-0812">Transmembrane</keyword>
<keyword id="KW-1133">Transmembrane helix</keyword>
<keyword id="KW-0813">Transport</keyword>
<keyword id="KW-0830">Ubiquinone</keyword>
<evidence type="ECO:0000250" key="1"/>
<evidence type="ECO:0000250" key="2">
    <source>
        <dbReference type="UniProtKB" id="P00157"/>
    </source>
</evidence>
<evidence type="ECO:0000255" key="3">
    <source>
        <dbReference type="PROSITE-ProRule" id="PRU00967"/>
    </source>
</evidence>
<evidence type="ECO:0000255" key="4">
    <source>
        <dbReference type="PROSITE-ProRule" id="PRU00968"/>
    </source>
</evidence>
<comment type="function">
    <text evidence="2">Component of the ubiquinol-cytochrome c reductase complex (complex III or cytochrome b-c1 complex) that is part of the mitochondrial respiratory chain. The b-c1 complex mediates electron transfer from ubiquinol to cytochrome c. Contributes to the generation of a proton gradient across the mitochondrial membrane that is then used for ATP synthesis.</text>
</comment>
<comment type="cofactor">
    <cofactor evidence="2">
        <name>heme b</name>
        <dbReference type="ChEBI" id="CHEBI:60344"/>
    </cofactor>
    <text evidence="2">Binds 2 heme b groups non-covalently.</text>
</comment>
<comment type="subunit">
    <text evidence="2">The cytochrome bc1 complex contains 11 subunits: 3 respiratory subunits (MT-CYB, CYC1 and UQCRFS1), 2 core proteins (UQCRC1 and UQCRC2) and 6 low-molecular weight proteins (UQCRH/QCR6, UQCRB/QCR7, UQCRQ/QCR8, UQCR10/QCR9, UQCR11/QCR10 and a cleavage product of UQCRFS1). This cytochrome bc1 complex then forms a dimer.</text>
</comment>
<comment type="subcellular location">
    <subcellularLocation>
        <location evidence="2">Mitochondrion inner membrane</location>
        <topology evidence="2">Multi-pass membrane protein</topology>
    </subcellularLocation>
</comment>
<comment type="miscellaneous">
    <text evidence="1">Heme 1 (or BL or b562) is low-potential and absorbs at about 562 nm, and heme 2 (or BH or b566) is high-potential and absorbs at about 566 nm.</text>
</comment>
<comment type="similarity">
    <text evidence="3 4">Belongs to the cytochrome b family.</text>
</comment>
<comment type="caution">
    <text evidence="2">The full-length protein contains only eight transmembrane helices, not nine as predicted by bioinformatics tools.</text>
</comment>
<dbReference type="EMBL" id="AY292722">
    <property type="protein sequence ID" value="AAS54918.1"/>
    <property type="molecule type" value="Genomic_DNA"/>
</dbReference>
<dbReference type="SMR" id="Q6ELW2"/>
<dbReference type="GO" id="GO:0005743">
    <property type="term" value="C:mitochondrial inner membrane"/>
    <property type="evidence" value="ECO:0007669"/>
    <property type="project" value="UniProtKB-SubCell"/>
</dbReference>
<dbReference type="GO" id="GO:0045275">
    <property type="term" value="C:respiratory chain complex III"/>
    <property type="evidence" value="ECO:0007669"/>
    <property type="project" value="InterPro"/>
</dbReference>
<dbReference type="GO" id="GO:0046872">
    <property type="term" value="F:metal ion binding"/>
    <property type="evidence" value="ECO:0007669"/>
    <property type="project" value="UniProtKB-KW"/>
</dbReference>
<dbReference type="GO" id="GO:0008121">
    <property type="term" value="F:ubiquinol-cytochrome-c reductase activity"/>
    <property type="evidence" value="ECO:0007669"/>
    <property type="project" value="InterPro"/>
</dbReference>
<dbReference type="GO" id="GO:0006122">
    <property type="term" value="P:mitochondrial electron transport, ubiquinol to cytochrome c"/>
    <property type="evidence" value="ECO:0007669"/>
    <property type="project" value="TreeGrafter"/>
</dbReference>
<dbReference type="CDD" id="cd00290">
    <property type="entry name" value="cytochrome_b_C"/>
    <property type="match status" value="1"/>
</dbReference>
<dbReference type="CDD" id="cd00284">
    <property type="entry name" value="Cytochrome_b_N"/>
    <property type="match status" value="1"/>
</dbReference>
<dbReference type="FunFam" id="1.20.810.10:FF:000002">
    <property type="entry name" value="Cytochrome b"/>
    <property type="match status" value="1"/>
</dbReference>
<dbReference type="Gene3D" id="1.20.810.10">
    <property type="entry name" value="Cytochrome Bc1 Complex, Chain C"/>
    <property type="match status" value="1"/>
</dbReference>
<dbReference type="InterPro" id="IPR005798">
    <property type="entry name" value="Cyt_b/b6_C"/>
</dbReference>
<dbReference type="InterPro" id="IPR036150">
    <property type="entry name" value="Cyt_b/b6_C_sf"/>
</dbReference>
<dbReference type="InterPro" id="IPR005797">
    <property type="entry name" value="Cyt_b/b6_N"/>
</dbReference>
<dbReference type="InterPro" id="IPR027387">
    <property type="entry name" value="Cytb/b6-like_sf"/>
</dbReference>
<dbReference type="InterPro" id="IPR030689">
    <property type="entry name" value="Cytochrome_b"/>
</dbReference>
<dbReference type="InterPro" id="IPR048260">
    <property type="entry name" value="Cytochrome_b_C_euk/bac"/>
</dbReference>
<dbReference type="InterPro" id="IPR048259">
    <property type="entry name" value="Cytochrome_b_N_euk/bac"/>
</dbReference>
<dbReference type="InterPro" id="IPR016174">
    <property type="entry name" value="Di-haem_cyt_TM"/>
</dbReference>
<dbReference type="PANTHER" id="PTHR19271">
    <property type="entry name" value="CYTOCHROME B"/>
    <property type="match status" value="1"/>
</dbReference>
<dbReference type="PANTHER" id="PTHR19271:SF16">
    <property type="entry name" value="CYTOCHROME B"/>
    <property type="match status" value="1"/>
</dbReference>
<dbReference type="Pfam" id="PF00032">
    <property type="entry name" value="Cytochrom_B_C"/>
    <property type="match status" value="1"/>
</dbReference>
<dbReference type="Pfam" id="PF00033">
    <property type="entry name" value="Cytochrome_B"/>
    <property type="match status" value="1"/>
</dbReference>
<dbReference type="PIRSF" id="PIRSF038885">
    <property type="entry name" value="COB"/>
    <property type="match status" value="1"/>
</dbReference>
<dbReference type="SUPFAM" id="SSF81648">
    <property type="entry name" value="a domain/subunit of cytochrome bc1 complex (Ubiquinol-cytochrome c reductase)"/>
    <property type="match status" value="1"/>
</dbReference>
<dbReference type="SUPFAM" id="SSF81342">
    <property type="entry name" value="Transmembrane di-heme cytochromes"/>
    <property type="match status" value="1"/>
</dbReference>
<dbReference type="PROSITE" id="PS51003">
    <property type="entry name" value="CYTB_CTER"/>
    <property type="match status" value="1"/>
</dbReference>
<dbReference type="PROSITE" id="PS51002">
    <property type="entry name" value="CYTB_NTER"/>
    <property type="match status" value="1"/>
</dbReference>
<proteinExistence type="inferred from homology"/>
<geneLocation type="mitochondrion"/>
<reference key="1">
    <citation type="journal article" date="2004" name="Syst. Biol.">
        <title>A molecular supermatrix of the rabbits and hares (Leporidae) allows for the identification of five intercontinental exchanges during the Miocene.</title>
        <authorList>
            <person name="Matthee C.A."/>
            <person name="van Vuuren B.J."/>
            <person name="Bell D."/>
            <person name="Robinson T.J."/>
        </authorList>
    </citation>
    <scope>NUCLEOTIDE SEQUENCE [GENOMIC DNA]</scope>
</reference>
<organism>
    <name type="scientific">Sylvilagus audubonii</name>
    <name type="common">Desert cottontail rabbit</name>
    <dbReference type="NCBI Taxonomy" id="30581"/>
    <lineage>
        <taxon>Eukaryota</taxon>
        <taxon>Metazoa</taxon>
        <taxon>Chordata</taxon>
        <taxon>Craniata</taxon>
        <taxon>Vertebrata</taxon>
        <taxon>Euteleostomi</taxon>
        <taxon>Mammalia</taxon>
        <taxon>Eutheria</taxon>
        <taxon>Euarchontoglires</taxon>
        <taxon>Glires</taxon>
        <taxon>Lagomorpha</taxon>
        <taxon>Leporidae</taxon>
        <taxon>Sylvilagus</taxon>
    </lineage>
</organism>
<accession>Q6ELW2</accession>
<gene>
    <name type="primary">MT-CYB</name>
    <name type="synonym">COB</name>
    <name type="synonym">CYTB</name>
    <name type="synonym">MTCYB</name>
</gene>
<protein>
    <recommendedName>
        <fullName>Cytochrome b</fullName>
    </recommendedName>
    <alternativeName>
        <fullName>Complex III subunit 3</fullName>
    </alternativeName>
    <alternativeName>
        <fullName>Complex III subunit III</fullName>
    </alternativeName>
    <alternativeName>
        <fullName>Cytochrome b-c1 complex subunit 3</fullName>
    </alternativeName>
    <alternativeName>
        <fullName>Ubiquinol-cytochrome-c reductase complex cytochrome b subunit</fullName>
    </alternativeName>
</protein>
<feature type="chain" id="PRO_0000061624" description="Cytochrome b">
    <location>
        <begin position="1"/>
        <end position="379"/>
    </location>
</feature>
<feature type="transmembrane region" description="Helical" evidence="2">
    <location>
        <begin position="33"/>
        <end position="53"/>
    </location>
</feature>
<feature type="transmembrane region" description="Helical" evidence="2">
    <location>
        <begin position="77"/>
        <end position="98"/>
    </location>
</feature>
<feature type="transmembrane region" description="Helical" evidence="2">
    <location>
        <begin position="113"/>
        <end position="133"/>
    </location>
</feature>
<feature type="transmembrane region" description="Helical" evidence="2">
    <location>
        <begin position="178"/>
        <end position="198"/>
    </location>
</feature>
<feature type="transmembrane region" description="Helical" evidence="2">
    <location>
        <begin position="226"/>
        <end position="246"/>
    </location>
</feature>
<feature type="transmembrane region" description="Helical" evidence="2">
    <location>
        <begin position="288"/>
        <end position="308"/>
    </location>
</feature>
<feature type="transmembrane region" description="Helical" evidence="2">
    <location>
        <begin position="320"/>
        <end position="340"/>
    </location>
</feature>
<feature type="transmembrane region" description="Helical" evidence="2">
    <location>
        <begin position="347"/>
        <end position="367"/>
    </location>
</feature>
<feature type="binding site" description="axial binding residue" evidence="2">
    <location>
        <position position="83"/>
    </location>
    <ligand>
        <name>heme b</name>
        <dbReference type="ChEBI" id="CHEBI:60344"/>
        <label>b562</label>
    </ligand>
    <ligandPart>
        <name>Fe</name>
        <dbReference type="ChEBI" id="CHEBI:18248"/>
    </ligandPart>
</feature>
<feature type="binding site" description="axial binding residue" evidence="2">
    <location>
        <position position="97"/>
    </location>
    <ligand>
        <name>heme b</name>
        <dbReference type="ChEBI" id="CHEBI:60344"/>
        <label>b566</label>
    </ligand>
    <ligandPart>
        <name>Fe</name>
        <dbReference type="ChEBI" id="CHEBI:18248"/>
    </ligandPart>
</feature>
<feature type="binding site" description="axial binding residue" evidence="2">
    <location>
        <position position="182"/>
    </location>
    <ligand>
        <name>heme b</name>
        <dbReference type="ChEBI" id="CHEBI:60344"/>
        <label>b562</label>
    </ligand>
    <ligandPart>
        <name>Fe</name>
        <dbReference type="ChEBI" id="CHEBI:18248"/>
    </ligandPart>
</feature>
<feature type="binding site" description="axial binding residue" evidence="2">
    <location>
        <position position="196"/>
    </location>
    <ligand>
        <name>heme b</name>
        <dbReference type="ChEBI" id="CHEBI:60344"/>
        <label>b566</label>
    </ligand>
    <ligandPart>
        <name>Fe</name>
        <dbReference type="ChEBI" id="CHEBI:18248"/>
    </ligandPart>
</feature>
<feature type="binding site" evidence="2">
    <location>
        <position position="201"/>
    </location>
    <ligand>
        <name>a ubiquinone</name>
        <dbReference type="ChEBI" id="CHEBI:16389"/>
    </ligand>
</feature>
<name>CYB_SYLAU</name>
<sequence>MTNIRKTHPLLKIINHSLIDLPTPSNISAWWNFGSLLGLCLIIQILTGLFLAMHYTSDTLTAFSSVTHICRDVNYGWLIRYLHANGASMFFICLYMHVGRGIYYGSYTYLETWNIGIILLFAVMATAFMGYVLPWGQMSFWGATVITNLLSAIPYIGTALVEWIWGGFSVDKATLTRFFAFHFILPFIIAALVMVHLLFLHETGSNNPSGIPSDSDKIPFHPYYTIKDALGFLVLILLLLLLVLFSPDLLGDPDNYTPANPLNTPPHIKPEWYFLFAYAILRSIPNKLGGVLALVMSILVLAIIPLLHTSKQRSMMFRPISQVLFWVLVADLLTLTWIGGQPVEHPFITIGQVASILYFSIILILMPLASLIENKILKW</sequence>